<name>TES_ATEGE</name>
<dbReference type="EMBL" id="DP000177">
    <property type="protein sequence ID" value="ABI75265.1"/>
    <property type="molecule type" value="Genomic_DNA"/>
</dbReference>
<dbReference type="SMR" id="Q09YL5"/>
<dbReference type="OrthoDB" id="10069167at2759"/>
<dbReference type="GO" id="GO:0005737">
    <property type="term" value="C:cytoplasm"/>
    <property type="evidence" value="ECO:0000250"/>
    <property type="project" value="UniProtKB"/>
</dbReference>
<dbReference type="GO" id="GO:0005925">
    <property type="term" value="C:focal adhesion"/>
    <property type="evidence" value="ECO:0007669"/>
    <property type="project" value="UniProtKB-SubCell"/>
</dbReference>
<dbReference type="GO" id="GO:0008270">
    <property type="term" value="F:zinc ion binding"/>
    <property type="evidence" value="ECO:0000250"/>
    <property type="project" value="UniProtKB"/>
</dbReference>
<dbReference type="GO" id="GO:0008285">
    <property type="term" value="P:negative regulation of cell population proliferation"/>
    <property type="evidence" value="ECO:0000250"/>
    <property type="project" value="UniProtKB"/>
</dbReference>
<dbReference type="CDD" id="cd09413">
    <property type="entry name" value="LIM1_Testin"/>
    <property type="match status" value="1"/>
</dbReference>
<dbReference type="CDD" id="cd09416">
    <property type="entry name" value="LIM2_Testin"/>
    <property type="match status" value="1"/>
</dbReference>
<dbReference type="CDD" id="cd09419">
    <property type="entry name" value="LIM3_Testin"/>
    <property type="match status" value="1"/>
</dbReference>
<dbReference type="CDD" id="cd09829">
    <property type="entry name" value="PET_testin"/>
    <property type="match status" value="1"/>
</dbReference>
<dbReference type="FunFam" id="2.10.110.10:FF:000061">
    <property type="entry name" value="Testin"/>
    <property type="match status" value="1"/>
</dbReference>
<dbReference type="FunFam" id="2.10.110.10:FF:000065">
    <property type="entry name" value="Testin"/>
    <property type="match status" value="1"/>
</dbReference>
<dbReference type="FunFam" id="2.10.110.10:FF:000005">
    <property type="entry name" value="Testin isoform 1"/>
    <property type="match status" value="1"/>
</dbReference>
<dbReference type="Gene3D" id="2.10.110.10">
    <property type="entry name" value="Cysteine Rich Protein"/>
    <property type="match status" value="3"/>
</dbReference>
<dbReference type="InterPro" id="IPR034958">
    <property type="entry name" value="LIM1_Testin"/>
</dbReference>
<dbReference type="InterPro" id="IPR034959">
    <property type="entry name" value="LIM2_Testin"/>
</dbReference>
<dbReference type="InterPro" id="IPR034960">
    <property type="entry name" value="LIM3_Testin"/>
</dbReference>
<dbReference type="InterPro" id="IPR010442">
    <property type="entry name" value="PET_domain"/>
</dbReference>
<dbReference type="InterPro" id="IPR033724">
    <property type="entry name" value="PET_testin"/>
</dbReference>
<dbReference type="InterPro" id="IPR047120">
    <property type="entry name" value="Pk/Esn/Tes"/>
</dbReference>
<dbReference type="InterPro" id="IPR001781">
    <property type="entry name" value="Znf_LIM"/>
</dbReference>
<dbReference type="PANTHER" id="PTHR24211">
    <property type="entry name" value="LIM DOMAIN-CONTAINING PROTEIN"/>
    <property type="match status" value="1"/>
</dbReference>
<dbReference type="PANTHER" id="PTHR24211:SF1">
    <property type="entry name" value="TESTIN"/>
    <property type="match status" value="1"/>
</dbReference>
<dbReference type="Pfam" id="PF00412">
    <property type="entry name" value="LIM"/>
    <property type="match status" value="3"/>
</dbReference>
<dbReference type="Pfam" id="PF06297">
    <property type="entry name" value="PET"/>
    <property type="match status" value="1"/>
</dbReference>
<dbReference type="SMART" id="SM00132">
    <property type="entry name" value="LIM"/>
    <property type="match status" value="3"/>
</dbReference>
<dbReference type="SUPFAM" id="SSF57716">
    <property type="entry name" value="Glucocorticoid receptor-like (DNA-binding domain)"/>
    <property type="match status" value="2"/>
</dbReference>
<dbReference type="PROSITE" id="PS00478">
    <property type="entry name" value="LIM_DOMAIN_1"/>
    <property type="match status" value="2"/>
</dbReference>
<dbReference type="PROSITE" id="PS50023">
    <property type="entry name" value="LIM_DOMAIN_2"/>
    <property type="match status" value="3"/>
</dbReference>
<dbReference type="PROSITE" id="PS51303">
    <property type="entry name" value="PET"/>
    <property type="match status" value="1"/>
</dbReference>
<organism>
    <name type="scientific">Ateles geoffroyi</name>
    <name type="common">Black-handed spider monkey</name>
    <name type="synonym">Geoffroy's spider monkey</name>
    <dbReference type="NCBI Taxonomy" id="9509"/>
    <lineage>
        <taxon>Eukaryota</taxon>
        <taxon>Metazoa</taxon>
        <taxon>Chordata</taxon>
        <taxon>Craniata</taxon>
        <taxon>Vertebrata</taxon>
        <taxon>Euteleostomi</taxon>
        <taxon>Mammalia</taxon>
        <taxon>Eutheria</taxon>
        <taxon>Euarchontoglires</taxon>
        <taxon>Primates</taxon>
        <taxon>Haplorrhini</taxon>
        <taxon>Platyrrhini</taxon>
        <taxon>Atelidae</taxon>
        <taxon>Atelinae</taxon>
        <taxon>Ateles</taxon>
    </lineage>
</organism>
<protein>
    <recommendedName>
        <fullName>Testin</fullName>
    </recommendedName>
</protein>
<proteinExistence type="inferred from homology"/>
<keyword id="KW-0965">Cell junction</keyword>
<keyword id="KW-0963">Cytoplasm</keyword>
<keyword id="KW-0440">LIM domain</keyword>
<keyword id="KW-0479">Metal-binding</keyword>
<keyword id="KW-0677">Repeat</keyword>
<keyword id="KW-0862">Zinc</keyword>
<gene>
    <name type="primary">TES</name>
</gene>
<reference key="1">
    <citation type="submission" date="2006-09" db="EMBL/GenBank/DDBJ databases">
        <title>NISC comparative sequencing initiative.</title>
        <authorList>
            <person name="Antonellis A."/>
            <person name="Ayele K."/>
            <person name="Benjamin B."/>
            <person name="Blakesley R.W."/>
            <person name="Boakye A."/>
            <person name="Bouffard G.G."/>
            <person name="Brinkley C."/>
            <person name="Brooks S."/>
            <person name="Chu G."/>
            <person name="Coleman H."/>
            <person name="Engle J."/>
            <person name="Gestole M."/>
            <person name="Greene A."/>
            <person name="Guan X."/>
            <person name="Gupta J."/>
            <person name="Haghighi P."/>
            <person name="Han J."/>
            <person name="Hansen N."/>
            <person name="Ho S.-L."/>
            <person name="Hu P."/>
            <person name="Hunter G."/>
            <person name="Hurle B."/>
            <person name="Idol J.R."/>
            <person name="Kwong P."/>
            <person name="Laric P."/>
            <person name="Larson S."/>
            <person name="Lee-Lin S.-Q."/>
            <person name="Legaspi R."/>
            <person name="Madden M."/>
            <person name="Maduro Q.L."/>
            <person name="Maduro V.B."/>
            <person name="Margulies E.H."/>
            <person name="Masiello C."/>
            <person name="Maskeri B."/>
            <person name="McDowell J."/>
            <person name="Mojidi H.A."/>
            <person name="Mullikin J.C."/>
            <person name="Oestreicher J.S."/>
            <person name="Park M."/>
            <person name="Portnoy M.E."/>
            <person name="Prasad A."/>
            <person name="Puri O."/>
            <person name="Reddix-Dugue N."/>
            <person name="Schandler K."/>
            <person name="Schueler M.G."/>
            <person name="Sison C."/>
            <person name="Stantripop S."/>
            <person name="Stephen E."/>
            <person name="Taye A."/>
            <person name="Thomas J.W."/>
            <person name="Thomas P.J."/>
            <person name="Tsipouri V."/>
            <person name="Ung L."/>
            <person name="Vogt J.L."/>
            <person name="Wetherby K.D."/>
            <person name="Young A."/>
            <person name="Green E.D."/>
        </authorList>
    </citation>
    <scope>NUCLEOTIDE SEQUENCE [LARGE SCALE GENOMIC DNA]</scope>
</reference>
<sequence>MDLENKVKKMGLGHEQGFGAPCLKCKEKCEGFELHFWRKICRNCKCGQEEHDVLLSNEEDRKVGKLFEDTKYTTLIAKLKSDGIPMYKRNVMILTNPVAAKKNVSINTVTYEWAPPVHNQALARQYMQMLPKEKQPVAGSEGAQYRKKQLAKQLPAHDQDPSKCHELSPREVKEMEQFVKKYKSEALGVGDVKLPCEMDAQGPKQIYIPGGDRSTPPAVGAMEDKSAEHKSTQYSCYCCKLSMKEGDPAIYAERAGYDKLWHPACFVCSICHELLVDMIYFWKNEKLYCGRHYCDSEKPRCAGCDELIFSNEYTQAENQNWHLKHFCCFDCDSILAGEIYVMVSDKPVCKPCYVKNHAVVCQGCHNAIDPEVQRVTYNNFSWHASTECFLCSCCSKCLIGQKFMPVEGMVFCSVECKKMMS</sequence>
<feature type="chain" id="PRO_0000260327" description="Testin">
    <location>
        <begin position="1"/>
        <end position="421"/>
    </location>
</feature>
<feature type="domain" description="PET" evidence="3">
    <location>
        <begin position="92"/>
        <end position="199"/>
    </location>
</feature>
<feature type="domain" description="LIM zinc-binding 1" evidence="2">
    <location>
        <begin position="234"/>
        <end position="297"/>
    </location>
</feature>
<feature type="domain" description="LIM zinc-binding 2" evidence="2">
    <location>
        <begin position="299"/>
        <end position="359"/>
    </location>
</feature>
<feature type="domain" description="LIM zinc-binding 3" evidence="2">
    <location>
        <begin position="362"/>
        <end position="421"/>
    </location>
</feature>
<feature type="region of interest" description="Disordered" evidence="4">
    <location>
        <begin position="133"/>
        <end position="164"/>
    </location>
</feature>
<feature type="compositionally biased region" description="Basic and acidic residues" evidence="4">
    <location>
        <begin position="155"/>
        <end position="164"/>
    </location>
</feature>
<accession>Q09YL5</accession>
<comment type="function">
    <text evidence="1">Scaffold protein that may play a role in cell adhesion, cell spreading and in the reorganization of the actin cytoskeleton. Plays a role in the regulation of cell proliferation. May act as a tumor suppressor (By similarity).</text>
</comment>
<comment type="subunit">
    <text evidence="1">Interacts via LIM domain 1 with ZYX. Interacts (via LIM domain 3) with ENAH and VASP. Interacts with ALKBH4, talin, actin, alpha-actinin, GRIP1 and PXN (By similarity). Interacts (via LIM domain 2) with ACTL7A (via N-terminus). Heterodimer with ACTL7A; the heterodimer interacts with ENAH to form a heterotrimer (By similarity).</text>
</comment>
<comment type="subcellular location">
    <subcellularLocation>
        <location evidence="1">Cytoplasm</location>
    </subcellularLocation>
    <subcellularLocation>
        <location evidence="1">Cell junction</location>
        <location evidence="1">Focal adhesion</location>
    </subcellularLocation>
    <text evidence="1">Detected along actin stress fibers.</text>
</comment>
<comment type="domain">
    <text evidence="1">The N-terminal and the C-terminal halves of the protein can associate with each other, thereby hindering interactions with ZYX.</text>
</comment>
<comment type="similarity">
    <text evidence="5">Belongs to the prickle / espinas / testin family.</text>
</comment>
<evidence type="ECO:0000250" key="1"/>
<evidence type="ECO:0000255" key="2">
    <source>
        <dbReference type="PROSITE-ProRule" id="PRU00125"/>
    </source>
</evidence>
<evidence type="ECO:0000255" key="3">
    <source>
        <dbReference type="PROSITE-ProRule" id="PRU00636"/>
    </source>
</evidence>
<evidence type="ECO:0000256" key="4">
    <source>
        <dbReference type="SAM" id="MobiDB-lite"/>
    </source>
</evidence>
<evidence type="ECO:0000305" key="5"/>